<feature type="chain" id="PRO_0000238958" description="Osteoclast-stimulating factor 1">
    <location>
        <begin position="1"/>
        <end position="214"/>
    </location>
</feature>
<feature type="domain" description="SH3" evidence="2">
    <location>
        <begin position="12"/>
        <end position="71"/>
    </location>
</feature>
<feature type="repeat" description="ANK 1">
    <location>
        <begin position="72"/>
        <end position="101"/>
    </location>
</feature>
<feature type="repeat" description="ANK 2">
    <location>
        <begin position="105"/>
        <end position="135"/>
    </location>
</feature>
<feature type="repeat" description="ANK 3">
    <location>
        <begin position="139"/>
        <end position="168"/>
    </location>
</feature>
<dbReference type="EMBL" id="AY398391">
    <property type="protein sequence ID" value="AAQ97824.1"/>
    <property type="molecule type" value="mRNA"/>
</dbReference>
<dbReference type="RefSeq" id="NP_998022.1">
    <property type="nucleotide sequence ID" value="NM_212857.2"/>
</dbReference>
<dbReference type="RefSeq" id="XP_009299439.1">
    <property type="nucleotide sequence ID" value="XM_009301164.2"/>
</dbReference>
<dbReference type="SMR" id="Q6TGW5"/>
<dbReference type="FunCoup" id="Q6TGW5">
    <property type="interactions" value="972"/>
</dbReference>
<dbReference type="STRING" id="7955.ENSDARP00000133534"/>
<dbReference type="PaxDb" id="7955-ENSDARP00000066307"/>
<dbReference type="Ensembl" id="ENSDART00000157402">
    <property type="protein sequence ID" value="ENSDARP00000136330"/>
    <property type="gene ID" value="ENSDARG00000091555"/>
</dbReference>
<dbReference type="Ensembl" id="ENSDART00000168698">
    <property type="protein sequence ID" value="ENSDARP00000133534"/>
    <property type="gene ID" value="ENSDARG00000091555"/>
</dbReference>
<dbReference type="GeneID" id="405783"/>
<dbReference type="KEGG" id="dre:405783"/>
<dbReference type="AGR" id="ZFIN:ZDB-GENE-040625-157"/>
<dbReference type="CTD" id="26578"/>
<dbReference type="ZFIN" id="ZDB-GENE-040625-157">
    <property type="gene designation" value="ostf1"/>
</dbReference>
<dbReference type="eggNOG" id="ENOG502QTZB">
    <property type="taxonomic scope" value="Eukaryota"/>
</dbReference>
<dbReference type="HOGENOM" id="CLU_092255_0_0_1"/>
<dbReference type="InParanoid" id="Q6TGW5"/>
<dbReference type="OrthoDB" id="207120at2759"/>
<dbReference type="PhylomeDB" id="Q6TGW5"/>
<dbReference type="TreeFam" id="TF314534"/>
<dbReference type="Reactome" id="R-DRE-6798695">
    <property type="pathway name" value="Neutrophil degranulation"/>
</dbReference>
<dbReference type="PRO" id="PR:Q6TGW5"/>
<dbReference type="Proteomes" id="UP000000437">
    <property type="component" value="Alternate scaffold 5"/>
</dbReference>
<dbReference type="Proteomes" id="UP000000437">
    <property type="component" value="Chromosome 5"/>
</dbReference>
<dbReference type="Bgee" id="ENSDARG00000091555">
    <property type="expression patterns" value="Expressed in granulocyte and 20 other cell types or tissues"/>
</dbReference>
<dbReference type="ExpressionAtlas" id="Q6TGW5">
    <property type="expression patterns" value="baseline and differential"/>
</dbReference>
<dbReference type="GO" id="GO:0005737">
    <property type="term" value="C:cytoplasm"/>
    <property type="evidence" value="ECO:0007669"/>
    <property type="project" value="UniProtKB-SubCell"/>
</dbReference>
<dbReference type="GO" id="GO:0007165">
    <property type="term" value="P:signal transduction"/>
    <property type="evidence" value="ECO:0000318"/>
    <property type="project" value="GO_Central"/>
</dbReference>
<dbReference type="CDD" id="cd11772">
    <property type="entry name" value="SH3_OSTF1"/>
    <property type="match status" value="1"/>
</dbReference>
<dbReference type="FunFam" id="2.30.30.40:FF:000072">
    <property type="entry name" value="Unconventional Myosin IB"/>
    <property type="match status" value="1"/>
</dbReference>
<dbReference type="Gene3D" id="1.25.40.20">
    <property type="entry name" value="Ankyrin repeat-containing domain"/>
    <property type="match status" value="1"/>
</dbReference>
<dbReference type="Gene3D" id="2.30.30.40">
    <property type="entry name" value="SH3 Domains"/>
    <property type="match status" value="1"/>
</dbReference>
<dbReference type="InterPro" id="IPR002110">
    <property type="entry name" value="Ankyrin_rpt"/>
</dbReference>
<dbReference type="InterPro" id="IPR036770">
    <property type="entry name" value="Ankyrin_rpt-contain_sf"/>
</dbReference>
<dbReference type="InterPro" id="IPR036028">
    <property type="entry name" value="SH3-like_dom_sf"/>
</dbReference>
<dbReference type="InterPro" id="IPR001452">
    <property type="entry name" value="SH3_domain"/>
</dbReference>
<dbReference type="PANTHER" id="PTHR24155">
    <property type="entry name" value="OSTEOCLAST-STIMULATING FACTOR 1"/>
    <property type="match status" value="1"/>
</dbReference>
<dbReference type="PANTHER" id="PTHR24155:SF10">
    <property type="entry name" value="OSTEOCLAST-STIMULATING FACTOR 1"/>
    <property type="match status" value="1"/>
</dbReference>
<dbReference type="Pfam" id="PF00023">
    <property type="entry name" value="Ank"/>
    <property type="match status" value="1"/>
</dbReference>
<dbReference type="Pfam" id="PF12796">
    <property type="entry name" value="Ank_2"/>
    <property type="match status" value="1"/>
</dbReference>
<dbReference type="Pfam" id="PF14604">
    <property type="entry name" value="SH3_9"/>
    <property type="match status" value="1"/>
</dbReference>
<dbReference type="PRINTS" id="PR00499">
    <property type="entry name" value="P67PHOX"/>
</dbReference>
<dbReference type="PRINTS" id="PR00452">
    <property type="entry name" value="SH3DOMAIN"/>
</dbReference>
<dbReference type="SMART" id="SM00248">
    <property type="entry name" value="ANK"/>
    <property type="match status" value="3"/>
</dbReference>
<dbReference type="SMART" id="SM00326">
    <property type="entry name" value="SH3"/>
    <property type="match status" value="1"/>
</dbReference>
<dbReference type="SUPFAM" id="SSF48403">
    <property type="entry name" value="Ankyrin repeat"/>
    <property type="match status" value="1"/>
</dbReference>
<dbReference type="SUPFAM" id="SSF50044">
    <property type="entry name" value="SH3-domain"/>
    <property type="match status" value="1"/>
</dbReference>
<dbReference type="PROSITE" id="PS50297">
    <property type="entry name" value="ANK_REP_REGION"/>
    <property type="match status" value="1"/>
</dbReference>
<dbReference type="PROSITE" id="PS50088">
    <property type="entry name" value="ANK_REPEAT"/>
    <property type="match status" value="1"/>
</dbReference>
<dbReference type="PROSITE" id="PS50002">
    <property type="entry name" value="SH3"/>
    <property type="match status" value="1"/>
</dbReference>
<organism>
    <name type="scientific">Danio rerio</name>
    <name type="common">Zebrafish</name>
    <name type="synonym">Brachydanio rerio</name>
    <dbReference type="NCBI Taxonomy" id="7955"/>
    <lineage>
        <taxon>Eukaryota</taxon>
        <taxon>Metazoa</taxon>
        <taxon>Chordata</taxon>
        <taxon>Craniata</taxon>
        <taxon>Vertebrata</taxon>
        <taxon>Euteleostomi</taxon>
        <taxon>Actinopterygii</taxon>
        <taxon>Neopterygii</taxon>
        <taxon>Teleostei</taxon>
        <taxon>Ostariophysi</taxon>
        <taxon>Cypriniformes</taxon>
        <taxon>Danionidae</taxon>
        <taxon>Danioninae</taxon>
        <taxon>Danio</taxon>
    </lineage>
</organism>
<sequence length="214" mass="23837">MSKPPPKPAKPGQVKVYRALFTFDPRTPDELYFEEGDILYISDTSDSNWWKGTCRGRTGLIPSNYVAEQAESIDNPMHEAAKRGNLSWLRECLDNKVGINGLDKAGNTSLYWACHGGHKDVVEILLSQPNCELNQQNKLGDTPLHAAAWKGYSDIVEMLLNKNARTDVVNNEKKTALDMATNAQCASLLKRKLGGVILRTHSNAEEYLDDEDSD</sequence>
<keyword id="KW-0040">ANK repeat</keyword>
<keyword id="KW-0963">Cytoplasm</keyword>
<keyword id="KW-1185">Reference proteome</keyword>
<keyword id="KW-0677">Repeat</keyword>
<keyword id="KW-0728">SH3 domain</keyword>
<evidence type="ECO:0000250" key="1"/>
<evidence type="ECO:0000255" key="2">
    <source>
        <dbReference type="PROSITE-ProRule" id="PRU00192"/>
    </source>
</evidence>
<name>OSTF1_DANRE</name>
<gene>
    <name type="primary">ostf1</name>
</gene>
<comment type="function">
    <text evidence="1">Induces bone resorption, acting probably through a signaling cascade which results in the secretion of factor(s) enhancing osteoclast formation and activity.</text>
</comment>
<comment type="subcellular location">
    <subcellularLocation>
        <location evidence="1">Cytoplasm</location>
    </subcellularLocation>
</comment>
<reference key="1">
    <citation type="journal article" date="2004" name="Proc. Natl. Acad. Sci. U.S.A.">
        <title>Hematopoietic gene expression profile in zebrafish kidney marrow.</title>
        <authorList>
            <person name="Song H.-D."/>
            <person name="Sun X.-J."/>
            <person name="Deng M."/>
            <person name="Zhang G.-W."/>
            <person name="Zhou Y."/>
            <person name="Wu X.-Y."/>
            <person name="Sheng Y."/>
            <person name="Chen Y."/>
            <person name="Ruan Z."/>
            <person name="Jiang C.-L."/>
            <person name="Fan H.-Y."/>
            <person name="Zon L.I."/>
            <person name="Kanki J.P."/>
            <person name="Liu T.X."/>
            <person name="Look A.T."/>
            <person name="Chen Z."/>
        </authorList>
    </citation>
    <scope>NUCLEOTIDE SEQUENCE [LARGE SCALE MRNA]</scope>
    <source>
        <tissue>Kidney marrow</tissue>
    </source>
</reference>
<accession>Q6TGW5</accession>
<proteinExistence type="evidence at transcript level"/>
<protein>
    <recommendedName>
        <fullName>Osteoclast-stimulating factor 1</fullName>
    </recommendedName>
</protein>